<gene>
    <name type="primary">BMT1</name>
    <name type="synonym">IFQ2</name>
    <name type="synonym">WRY4</name>
    <name type="ordered locus">CAALFM_C307180CA</name>
    <name type="ORF">CaO19.14074</name>
    <name type="ORF">CaO19.6782</name>
</gene>
<evidence type="ECO:0000255" key="1"/>
<evidence type="ECO:0000269" key="2">
    <source>
    </source>
</evidence>
<evidence type="ECO:0000269" key="3">
    <source>
    </source>
</evidence>
<evidence type="ECO:0000305" key="4"/>
<sequence length="684" mass="79603">MDKFIQSFSHQYLDSSSSLKLTARRKRKLTILGLFLFSLISLMIIISYSNNNILPGLSGISISSTFSDYYSNPKQQNKFEQQIQDHQTTKKGKRTIIFPNNFNHVHDHKGSYMMKDSELVKYYVETMEQALDPEDLIYRNRFTYKLPNIPYTEQKIEMFSDGGGGGGDTSDSNTDMCPKLSTTIKVEASPAMNKNGDLKKILKTFLQEDSFYYRELSPFFPDLKKHFDEDTIDKHWYQFIGSTVWLEQYGVHLMVSRIIYTEKDQGSPKFSLAYLQVFDRNWKELDNVELIVPDPENISTTNNKNKNKKPYGYKSVLYPTIAPIPVYHNSKQTGGRFYGIEDPRIVLIKTRHGYEEPVLIYNSHHRKISEKHFDNDQEGKINFNNYRSLFIGWIWQTQLGKIHLEELPNNEFKKNEYIKIKEFVKPNNNRGRTEKNWALFINYNQRLNQGFDSHVYFANQLKNLKILKCSILNDNDDDCEWEFQMDDYEDAGVLHGGTELININQLLHQYDYPELNSIKDLIPNGREYWVGFARASLKNCGCGSRMYRPNLIVLMKDGKNYKFAYVSSFVGLGIEILPWYLDKGLCEHYNLIIPNGISSWTIEKDLHQKEKDKQVMDYMAFTISRRDATVDVVYVKGLLKALFTDSSSSKHLLAVEQTGFKSVTNVDCALKNSEKFCKIYGETF</sequence>
<comment type="function">
    <text evidence="2 3">Beta-mannosyltransferase involved in cell wall biosynthesis. Required for addition of the first beta-mannose residue to acid-stable fraction of cell wall phosphopeptidomannan. Plays a key role in reducing host inflammatory response.</text>
</comment>
<comment type="subcellular location">
    <subcellularLocation>
        <location evidence="4">Membrane</location>
        <topology evidence="4">Single-pass type II membrane protein</topology>
    </subcellularLocation>
</comment>
<comment type="disruption phenotype">
    <text evidence="2">Impairs the mannosylation of beta-mannose chains on the acid-stable fraction of cell wall phosphopeptidomannan.</text>
</comment>
<comment type="similarity">
    <text evidence="4">Belongs to the BMT family.</text>
</comment>
<organism>
    <name type="scientific">Candida albicans (strain SC5314 / ATCC MYA-2876)</name>
    <name type="common">Yeast</name>
    <dbReference type="NCBI Taxonomy" id="237561"/>
    <lineage>
        <taxon>Eukaryota</taxon>
        <taxon>Fungi</taxon>
        <taxon>Dikarya</taxon>
        <taxon>Ascomycota</taxon>
        <taxon>Saccharomycotina</taxon>
        <taxon>Pichiomycetes</taxon>
        <taxon>Debaryomycetaceae</taxon>
        <taxon>Candida/Lodderomyces clade</taxon>
        <taxon>Candida</taxon>
    </lineage>
</organism>
<protein>
    <recommendedName>
        <fullName>Beta-mannosyltransferase 1</fullName>
        <ecNumber>2.4.1.-</ecNumber>
    </recommendedName>
    <alternativeName>
        <fullName>WRY family protein 4</fullName>
    </alternativeName>
</protein>
<dbReference type="EC" id="2.4.1.-"/>
<dbReference type="EMBL" id="CP017625">
    <property type="protein sequence ID" value="AOW28721.1"/>
    <property type="molecule type" value="Genomic_DNA"/>
</dbReference>
<dbReference type="RefSeq" id="XP_719878.1">
    <property type="nucleotide sequence ID" value="XM_714785.1"/>
</dbReference>
<dbReference type="STRING" id="237561.Q5ADQ9"/>
<dbReference type="CAZy" id="GT91">
    <property type="family name" value="Glycosyltransferase Family 91"/>
</dbReference>
<dbReference type="GlyCosmos" id="Q5ADQ9">
    <property type="glycosylation" value="1 site, No reported glycans"/>
</dbReference>
<dbReference type="EnsemblFungi" id="C3_07180C_A-T">
    <property type="protein sequence ID" value="C3_07180C_A-T-p1"/>
    <property type="gene ID" value="C3_07180C_A"/>
</dbReference>
<dbReference type="GeneID" id="3638535"/>
<dbReference type="KEGG" id="cal:CAALFM_C307180CA"/>
<dbReference type="CGD" id="CAL0000201954">
    <property type="gene designation" value="BMT1"/>
</dbReference>
<dbReference type="VEuPathDB" id="FungiDB:C3_07180C_A"/>
<dbReference type="eggNOG" id="ENOG502QTZG">
    <property type="taxonomic scope" value="Eukaryota"/>
</dbReference>
<dbReference type="HOGENOM" id="CLU_013841_1_1_1"/>
<dbReference type="InParanoid" id="Q5ADQ9"/>
<dbReference type="OrthoDB" id="3631276at2759"/>
<dbReference type="PRO" id="PR:Q5ADQ9"/>
<dbReference type="Proteomes" id="UP000000559">
    <property type="component" value="Chromosome 3"/>
</dbReference>
<dbReference type="GO" id="GO:0016020">
    <property type="term" value="C:membrane"/>
    <property type="evidence" value="ECO:0007669"/>
    <property type="project" value="UniProtKB-SubCell"/>
</dbReference>
<dbReference type="GO" id="GO:0000030">
    <property type="term" value="F:mannosyltransferase activity"/>
    <property type="evidence" value="ECO:0000314"/>
    <property type="project" value="CGD"/>
</dbReference>
<dbReference type="GO" id="GO:0070136">
    <property type="term" value="P:beta-1,2-oligomannoside biosynthetic process"/>
    <property type="evidence" value="ECO:0000314"/>
    <property type="project" value="CGD"/>
</dbReference>
<dbReference type="GO" id="GO:0070135">
    <property type="term" value="P:beta-1,2-oligomannoside metabolic process"/>
    <property type="evidence" value="ECO:0000315"/>
    <property type="project" value="CGD"/>
</dbReference>
<dbReference type="GO" id="GO:0071555">
    <property type="term" value="P:cell wall organization"/>
    <property type="evidence" value="ECO:0007669"/>
    <property type="project" value="UniProtKB-KW"/>
</dbReference>
<dbReference type="GO" id="GO:0035269">
    <property type="term" value="P:protein O-linked mannosylation"/>
    <property type="evidence" value="ECO:0000315"/>
    <property type="project" value="CGD"/>
</dbReference>
<dbReference type="InterPro" id="IPR021988">
    <property type="entry name" value="BMT1"/>
</dbReference>
<dbReference type="Pfam" id="PF12141">
    <property type="entry name" value="BMT"/>
    <property type="match status" value="1"/>
</dbReference>
<feature type="chain" id="PRO_0000426069" description="Beta-mannosyltransferase 1">
    <location>
        <begin position="1"/>
        <end position="684"/>
    </location>
</feature>
<feature type="topological domain" description="Cytoplasmic" evidence="1">
    <location>
        <begin position="1"/>
        <end position="28"/>
    </location>
</feature>
<feature type="transmembrane region" description="Helical" evidence="1">
    <location>
        <begin position="29"/>
        <end position="49"/>
    </location>
</feature>
<feature type="topological domain" description="Extracellular" evidence="1">
    <location>
        <begin position="50"/>
        <end position="684"/>
    </location>
</feature>
<feature type="glycosylation site" description="N-linked (GlcNAc...) asparagine" evidence="1">
    <location>
        <position position="297"/>
    </location>
</feature>
<name>BMT1_CANAL</name>
<proteinExistence type="inferred from homology"/>
<keyword id="KW-0961">Cell wall biogenesis/degradation</keyword>
<keyword id="KW-0325">Glycoprotein</keyword>
<keyword id="KW-0328">Glycosyltransferase</keyword>
<keyword id="KW-0472">Membrane</keyword>
<keyword id="KW-1185">Reference proteome</keyword>
<keyword id="KW-0735">Signal-anchor</keyword>
<keyword id="KW-0808">Transferase</keyword>
<keyword id="KW-0812">Transmembrane</keyword>
<keyword id="KW-1133">Transmembrane helix</keyword>
<keyword id="KW-0843">Virulence</keyword>
<reference key="1">
    <citation type="journal article" date="2004" name="Proc. Natl. Acad. Sci. U.S.A.">
        <title>The diploid genome sequence of Candida albicans.</title>
        <authorList>
            <person name="Jones T."/>
            <person name="Federspiel N.A."/>
            <person name="Chibana H."/>
            <person name="Dungan J."/>
            <person name="Kalman S."/>
            <person name="Magee B.B."/>
            <person name="Newport G."/>
            <person name="Thorstenson Y.R."/>
            <person name="Agabian N."/>
            <person name="Magee P.T."/>
            <person name="Davis R.W."/>
            <person name="Scherer S."/>
        </authorList>
    </citation>
    <scope>NUCLEOTIDE SEQUENCE [LARGE SCALE GENOMIC DNA]</scope>
    <source>
        <strain>SC5314 / ATCC MYA-2876</strain>
    </source>
</reference>
<reference key="2">
    <citation type="journal article" date="2007" name="Genome Biol.">
        <title>Assembly of the Candida albicans genome into sixteen supercontigs aligned on the eight chromosomes.</title>
        <authorList>
            <person name="van het Hoog M."/>
            <person name="Rast T.J."/>
            <person name="Martchenko M."/>
            <person name="Grindle S."/>
            <person name="Dignard D."/>
            <person name="Hogues H."/>
            <person name="Cuomo C."/>
            <person name="Berriman M."/>
            <person name="Scherer S."/>
            <person name="Magee B.B."/>
            <person name="Whiteway M."/>
            <person name="Chibana H."/>
            <person name="Nantel A."/>
            <person name="Magee P.T."/>
        </authorList>
    </citation>
    <scope>GENOME REANNOTATION</scope>
    <source>
        <strain>SC5314 / ATCC MYA-2876</strain>
    </source>
</reference>
<reference key="3">
    <citation type="journal article" date="2013" name="Genome Biol.">
        <title>Assembly of a phased diploid Candida albicans genome facilitates allele-specific measurements and provides a simple model for repeat and indel structure.</title>
        <authorList>
            <person name="Muzzey D."/>
            <person name="Schwartz K."/>
            <person name="Weissman J.S."/>
            <person name="Sherlock G."/>
        </authorList>
    </citation>
    <scope>NUCLEOTIDE SEQUENCE [LARGE SCALE GENOMIC DNA]</scope>
    <scope>GENOME REANNOTATION</scope>
    <source>
        <strain>SC5314 / ATCC MYA-2876</strain>
    </source>
</reference>
<reference key="4">
    <citation type="journal article" date="2008" name="J. Biol. Chem.">
        <title>Identification of a new family of genes involved in beta-1,2-mannosylation of glycans in Pichia pastoris and Candida albicans.</title>
        <authorList>
            <person name="Mille C."/>
            <person name="Bobrowicz P."/>
            <person name="Trinel P.A."/>
            <person name="Li H."/>
            <person name="Maes E."/>
            <person name="Guerardel Y."/>
            <person name="Fradin C."/>
            <person name="Martinez-Esparza M."/>
            <person name="Davidson R.C."/>
            <person name="Janbon G."/>
            <person name="Poulain D."/>
            <person name="Wildt S."/>
        </authorList>
    </citation>
    <scope>IDENTIFICATION</scope>
    <scope>DISRUPTION PHENOTYPE</scope>
    <scope>FUNCTION</scope>
</reference>
<reference key="5">
    <citation type="journal article" date="2013" name="Med. Mycol.">
        <title>The mannan of Candida albicans lacking beta-1,2-linked oligomannosides increases the production of inflammatory cytokines by dendritic cells.</title>
        <authorList>
            <person name="Ueno K."/>
            <person name="Okawara A."/>
            <person name="Yamagoe S."/>
            <person name="Naka T."/>
            <person name="Umeyama T."/>
            <person name="Utena-Abe Y."/>
            <person name="Tarumoto N."/>
            <person name="Niimi M."/>
            <person name="Ohno H."/>
            <person name="Doe M."/>
            <person name="Fujiwara N."/>
            <person name="Kinjo Y."/>
            <person name="Miyazaki Y."/>
        </authorList>
    </citation>
    <scope>FUNCTION</scope>
</reference>
<accession>Q5ADQ9</accession>
<accession>A0A1D8PKP2</accession>